<proteinExistence type="predicted"/>
<protein>
    <recommendedName>
        <fullName>Uncharacterized HTH-type transcriptional regulator PF1231</fullName>
    </recommendedName>
</protein>
<evidence type="ECO:0000255" key="1">
    <source>
        <dbReference type="PROSITE-ProRule" id="PRU00319"/>
    </source>
</evidence>
<dbReference type="EMBL" id="AE009950">
    <property type="protein sequence ID" value="AAL81355.1"/>
    <property type="molecule type" value="Genomic_DNA"/>
</dbReference>
<dbReference type="RefSeq" id="WP_011012374.1">
    <property type="nucleotide sequence ID" value="NZ_CP023154.1"/>
</dbReference>
<dbReference type="SMR" id="Q8U1H7"/>
<dbReference type="STRING" id="186497.PF1231"/>
<dbReference type="PaxDb" id="186497-PF1231"/>
<dbReference type="KEGG" id="pfu:PF1231"/>
<dbReference type="PATRIC" id="fig|186497.12.peg.1293"/>
<dbReference type="eggNOG" id="arCOG01580">
    <property type="taxonomic scope" value="Archaea"/>
</dbReference>
<dbReference type="HOGENOM" id="CLU_091233_5_2_2"/>
<dbReference type="OrthoDB" id="6762at2157"/>
<dbReference type="PhylomeDB" id="Q8U1H7"/>
<dbReference type="Proteomes" id="UP000001013">
    <property type="component" value="Chromosome"/>
</dbReference>
<dbReference type="GO" id="GO:0005829">
    <property type="term" value="C:cytosol"/>
    <property type="evidence" value="ECO:0007669"/>
    <property type="project" value="TreeGrafter"/>
</dbReference>
<dbReference type="GO" id="GO:0043565">
    <property type="term" value="F:sequence-specific DNA binding"/>
    <property type="evidence" value="ECO:0007669"/>
    <property type="project" value="InterPro"/>
</dbReference>
<dbReference type="GO" id="GO:0043200">
    <property type="term" value="P:response to amino acid"/>
    <property type="evidence" value="ECO:0007669"/>
    <property type="project" value="TreeGrafter"/>
</dbReference>
<dbReference type="CDD" id="cd00090">
    <property type="entry name" value="HTH_ARSR"/>
    <property type="match status" value="1"/>
</dbReference>
<dbReference type="Gene3D" id="3.30.70.920">
    <property type="match status" value="1"/>
</dbReference>
<dbReference type="Gene3D" id="1.10.10.10">
    <property type="entry name" value="Winged helix-like DNA-binding domain superfamily/Winged helix DNA-binding domain"/>
    <property type="match status" value="1"/>
</dbReference>
<dbReference type="InterPro" id="IPR011991">
    <property type="entry name" value="ArsR-like_HTH"/>
</dbReference>
<dbReference type="InterPro" id="IPR000485">
    <property type="entry name" value="AsnC-type_HTH_dom"/>
</dbReference>
<dbReference type="InterPro" id="IPR011008">
    <property type="entry name" value="Dimeric_a/b-barrel"/>
</dbReference>
<dbReference type="InterPro" id="IPR019888">
    <property type="entry name" value="Tscrpt_reg_AsnC-like"/>
</dbReference>
<dbReference type="InterPro" id="IPR019887">
    <property type="entry name" value="Tscrpt_reg_AsnC/Lrp_C"/>
</dbReference>
<dbReference type="InterPro" id="IPR036388">
    <property type="entry name" value="WH-like_DNA-bd_sf"/>
</dbReference>
<dbReference type="InterPro" id="IPR036390">
    <property type="entry name" value="WH_DNA-bd_sf"/>
</dbReference>
<dbReference type="PANTHER" id="PTHR30154">
    <property type="entry name" value="LEUCINE-RESPONSIVE REGULATORY PROTEIN"/>
    <property type="match status" value="1"/>
</dbReference>
<dbReference type="PANTHER" id="PTHR30154:SF34">
    <property type="entry name" value="TRANSCRIPTIONAL REGULATOR AZLB"/>
    <property type="match status" value="1"/>
</dbReference>
<dbReference type="Pfam" id="PF01037">
    <property type="entry name" value="AsnC_trans_reg"/>
    <property type="match status" value="1"/>
</dbReference>
<dbReference type="Pfam" id="PF13404">
    <property type="entry name" value="HTH_AsnC-type"/>
    <property type="match status" value="1"/>
</dbReference>
<dbReference type="PRINTS" id="PR00033">
    <property type="entry name" value="HTHASNC"/>
</dbReference>
<dbReference type="SMART" id="SM00344">
    <property type="entry name" value="HTH_ASNC"/>
    <property type="match status" value="1"/>
</dbReference>
<dbReference type="SUPFAM" id="SSF54909">
    <property type="entry name" value="Dimeric alpha+beta barrel"/>
    <property type="match status" value="1"/>
</dbReference>
<dbReference type="SUPFAM" id="SSF46785">
    <property type="entry name" value="Winged helix' DNA-binding domain"/>
    <property type="match status" value="1"/>
</dbReference>
<dbReference type="PROSITE" id="PS50956">
    <property type="entry name" value="HTH_ASNC_2"/>
    <property type="match status" value="1"/>
</dbReference>
<reference key="1">
    <citation type="journal article" date="1999" name="Genetics">
        <title>Divergence of the hyperthermophilic archaea Pyrococcus furiosus and P. horikoshii inferred from complete genomic sequences.</title>
        <authorList>
            <person name="Maeder D.L."/>
            <person name="Weiss R.B."/>
            <person name="Dunn D.M."/>
            <person name="Cherry J.L."/>
            <person name="Gonzalez J.M."/>
            <person name="DiRuggiero J."/>
            <person name="Robb F.T."/>
        </authorList>
    </citation>
    <scope>NUCLEOTIDE SEQUENCE [LARGE SCALE GENOMIC DNA]</scope>
    <source>
        <strain>ATCC 43587 / DSM 3638 / JCM 8422 / Vc1</strain>
    </source>
</reference>
<organism>
    <name type="scientific">Pyrococcus furiosus (strain ATCC 43587 / DSM 3638 / JCM 8422 / Vc1)</name>
    <dbReference type="NCBI Taxonomy" id="186497"/>
    <lineage>
        <taxon>Archaea</taxon>
        <taxon>Methanobacteriati</taxon>
        <taxon>Methanobacteriota</taxon>
        <taxon>Thermococci</taxon>
        <taxon>Thermococcales</taxon>
        <taxon>Thermococcaceae</taxon>
        <taxon>Pyrococcus</taxon>
    </lineage>
</organism>
<feature type="chain" id="PRO_0000111761" description="Uncharacterized HTH-type transcriptional regulator PF1231">
    <location>
        <begin position="1"/>
        <end position="148"/>
    </location>
</feature>
<feature type="domain" description="HTH asnC-type" evidence="1">
    <location>
        <begin position="2"/>
        <end position="63"/>
    </location>
</feature>
<feature type="DNA-binding region" description="H-T-H motif" evidence="1">
    <location>
        <begin position="21"/>
        <end position="40"/>
    </location>
</feature>
<keyword id="KW-0238">DNA-binding</keyword>
<keyword id="KW-1185">Reference proteome</keyword>
<keyword id="KW-0804">Transcription</keyword>
<keyword id="KW-0805">Transcription regulation</keyword>
<sequence length="148" mass="16753">MLDELDKRILYFLQEDGRRSYSEIARILGVPESTVRVRVKKMLKNGIIRKFAALINPFKAGYEIVAVIAVDVEPNKVREVAEKLAELNEVDVLGIATGAHDIFMQVTVKSLRELEEFLLDKLGKIEGIKSTETSILTSVKKWGYARVF</sequence>
<gene>
    <name type="ordered locus">PF1231</name>
</gene>
<accession>Q8U1H7</accession>
<name>REG3_PYRFU</name>